<proteinExistence type="inferred from homology"/>
<feature type="chain" id="PRO_1000131300" description="ATP-dependent RNA helicase RhlB">
    <location>
        <begin position="1"/>
        <end position="421"/>
    </location>
</feature>
<feature type="domain" description="Helicase ATP-binding" evidence="1">
    <location>
        <begin position="40"/>
        <end position="219"/>
    </location>
</feature>
<feature type="domain" description="Helicase C-terminal" evidence="1">
    <location>
        <begin position="245"/>
        <end position="390"/>
    </location>
</feature>
<feature type="region of interest" description="Disordered" evidence="2">
    <location>
        <begin position="396"/>
        <end position="421"/>
    </location>
</feature>
<feature type="short sequence motif" description="Q motif">
    <location>
        <begin position="9"/>
        <end position="37"/>
    </location>
</feature>
<feature type="short sequence motif" description="DEAD box">
    <location>
        <begin position="165"/>
        <end position="168"/>
    </location>
</feature>
<feature type="compositionally biased region" description="Low complexity" evidence="2">
    <location>
        <begin position="402"/>
        <end position="414"/>
    </location>
</feature>
<feature type="binding site" evidence="1">
    <location>
        <begin position="53"/>
        <end position="60"/>
    </location>
    <ligand>
        <name>ATP</name>
        <dbReference type="ChEBI" id="CHEBI:30616"/>
    </ligand>
</feature>
<name>RHLB_SALA4</name>
<sequence length="421" mass="47093">MSKTHLTEQKFSDFALHPQVVEALEKKGFYNCTPIQALALPLTLAGRDVAGQAQTGTGKTMAFLTSTFHYLLSHPAIDDRKVNQPRALIMAPTRELAVQIHADAEPLAQATGLKLGLAYGGDGYDKQLKVLESGVDILIGTTGRLIDYAKQNHINLGAIQVVVLDEADRMYDLGFIKDIRWLFRRMPPAAQRLNMLFSATLSYRVRELAFEQMNNAEYVEVEPEQKTGHRIKEELFYPSNEEKMRLLQTLIEEEWPDRAIIFANTKHRCEDIWGHLAADGHRVGLLTGDVAQKKRLRILDEFTRGDLDILVATDVAARGLHIPAVTHVFNYDLPDDCEDYVHRIGRTGRAGASGHSISLACEEYALNLPAIESYIGHSIPVSKYNPEALMNDLPKPLRLTRSRPGNGPRRAGAPRNRRRSG</sequence>
<gene>
    <name evidence="1" type="primary">rhlB</name>
    <name type="ordered locus">SeAg_B4141</name>
</gene>
<accession>B5EZ40</accession>
<reference key="1">
    <citation type="journal article" date="2011" name="J. Bacteriol.">
        <title>Comparative genomics of 28 Salmonella enterica isolates: evidence for CRISPR-mediated adaptive sublineage evolution.</title>
        <authorList>
            <person name="Fricke W.F."/>
            <person name="Mammel M.K."/>
            <person name="McDermott P.F."/>
            <person name="Tartera C."/>
            <person name="White D.G."/>
            <person name="Leclerc J.E."/>
            <person name="Ravel J."/>
            <person name="Cebula T.A."/>
        </authorList>
    </citation>
    <scope>NUCLEOTIDE SEQUENCE [LARGE SCALE GENOMIC DNA]</scope>
    <source>
        <strain>SL483</strain>
    </source>
</reference>
<organism>
    <name type="scientific">Salmonella agona (strain SL483)</name>
    <dbReference type="NCBI Taxonomy" id="454166"/>
    <lineage>
        <taxon>Bacteria</taxon>
        <taxon>Pseudomonadati</taxon>
        <taxon>Pseudomonadota</taxon>
        <taxon>Gammaproteobacteria</taxon>
        <taxon>Enterobacterales</taxon>
        <taxon>Enterobacteriaceae</taxon>
        <taxon>Salmonella</taxon>
    </lineage>
</organism>
<protein>
    <recommendedName>
        <fullName evidence="1">ATP-dependent RNA helicase RhlB</fullName>
        <ecNumber evidence="1">3.6.4.13</ecNumber>
    </recommendedName>
</protein>
<comment type="function">
    <text evidence="1">DEAD-box RNA helicase involved in RNA degradation. Has RNA-dependent ATPase activity and unwinds double-stranded RNA.</text>
</comment>
<comment type="catalytic activity">
    <reaction evidence="1">
        <text>ATP + H2O = ADP + phosphate + H(+)</text>
        <dbReference type="Rhea" id="RHEA:13065"/>
        <dbReference type="ChEBI" id="CHEBI:15377"/>
        <dbReference type="ChEBI" id="CHEBI:15378"/>
        <dbReference type="ChEBI" id="CHEBI:30616"/>
        <dbReference type="ChEBI" id="CHEBI:43474"/>
        <dbReference type="ChEBI" id="CHEBI:456216"/>
        <dbReference type="EC" id="3.6.4.13"/>
    </reaction>
</comment>
<comment type="subunit">
    <text evidence="1">Component of the RNA degradosome, which is a multiprotein complex involved in RNA processing and mRNA degradation.</text>
</comment>
<comment type="subcellular location">
    <subcellularLocation>
        <location evidence="1">Cytoplasm</location>
    </subcellularLocation>
</comment>
<comment type="similarity">
    <text evidence="1">Belongs to the DEAD box helicase family. RhlB subfamily.</text>
</comment>
<evidence type="ECO:0000255" key="1">
    <source>
        <dbReference type="HAMAP-Rule" id="MF_00661"/>
    </source>
</evidence>
<evidence type="ECO:0000256" key="2">
    <source>
        <dbReference type="SAM" id="MobiDB-lite"/>
    </source>
</evidence>
<dbReference type="EC" id="3.6.4.13" evidence="1"/>
<dbReference type="EMBL" id="CP001138">
    <property type="protein sequence ID" value="ACH52134.1"/>
    <property type="molecule type" value="Genomic_DNA"/>
</dbReference>
<dbReference type="RefSeq" id="WP_000047525.1">
    <property type="nucleotide sequence ID" value="NC_011149.1"/>
</dbReference>
<dbReference type="SMR" id="B5EZ40"/>
<dbReference type="KEGG" id="sea:SeAg_B4141"/>
<dbReference type="HOGENOM" id="CLU_003041_1_3_6"/>
<dbReference type="Proteomes" id="UP000008819">
    <property type="component" value="Chromosome"/>
</dbReference>
<dbReference type="GO" id="GO:0005829">
    <property type="term" value="C:cytosol"/>
    <property type="evidence" value="ECO:0007669"/>
    <property type="project" value="TreeGrafter"/>
</dbReference>
<dbReference type="GO" id="GO:0005524">
    <property type="term" value="F:ATP binding"/>
    <property type="evidence" value="ECO:0007669"/>
    <property type="project" value="UniProtKB-UniRule"/>
</dbReference>
<dbReference type="GO" id="GO:0016887">
    <property type="term" value="F:ATP hydrolysis activity"/>
    <property type="evidence" value="ECO:0007669"/>
    <property type="project" value="RHEA"/>
</dbReference>
<dbReference type="GO" id="GO:0003723">
    <property type="term" value="F:RNA binding"/>
    <property type="evidence" value="ECO:0007669"/>
    <property type="project" value="UniProtKB-UniRule"/>
</dbReference>
<dbReference type="GO" id="GO:0003724">
    <property type="term" value="F:RNA helicase activity"/>
    <property type="evidence" value="ECO:0007669"/>
    <property type="project" value="UniProtKB-UniRule"/>
</dbReference>
<dbReference type="GO" id="GO:0006401">
    <property type="term" value="P:RNA catabolic process"/>
    <property type="evidence" value="ECO:0007669"/>
    <property type="project" value="UniProtKB-UniRule"/>
</dbReference>
<dbReference type="CDD" id="cd00268">
    <property type="entry name" value="DEADc"/>
    <property type="match status" value="1"/>
</dbReference>
<dbReference type="CDD" id="cd18787">
    <property type="entry name" value="SF2_C_DEAD"/>
    <property type="match status" value="1"/>
</dbReference>
<dbReference type="FunFam" id="3.40.50.300:FF:000008">
    <property type="entry name" value="ATP-dependent RNA helicase RhlB"/>
    <property type="match status" value="1"/>
</dbReference>
<dbReference type="FunFam" id="3.40.50.300:FF:000312">
    <property type="entry name" value="ATP-dependent RNA helicase RhlB"/>
    <property type="match status" value="1"/>
</dbReference>
<dbReference type="Gene3D" id="3.40.50.300">
    <property type="entry name" value="P-loop containing nucleotide triphosphate hydrolases"/>
    <property type="match status" value="2"/>
</dbReference>
<dbReference type="HAMAP" id="MF_00661">
    <property type="entry name" value="DEAD_helicase_RhlB"/>
    <property type="match status" value="1"/>
</dbReference>
<dbReference type="InterPro" id="IPR011545">
    <property type="entry name" value="DEAD/DEAH_box_helicase_dom"/>
</dbReference>
<dbReference type="InterPro" id="IPR050079">
    <property type="entry name" value="DEAD_box_RNA_helicase"/>
</dbReference>
<dbReference type="InterPro" id="IPR014001">
    <property type="entry name" value="Helicase_ATP-bd"/>
</dbReference>
<dbReference type="InterPro" id="IPR001650">
    <property type="entry name" value="Helicase_C-like"/>
</dbReference>
<dbReference type="InterPro" id="IPR027417">
    <property type="entry name" value="P-loop_NTPase"/>
</dbReference>
<dbReference type="InterPro" id="IPR000629">
    <property type="entry name" value="RNA-helicase_DEAD-box_CS"/>
</dbReference>
<dbReference type="InterPro" id="IPR023554">
    <property type="entry name" value="RNA_helicase_ATP-dep_RhlB"/>
</dbReference>
<dbReference type="InterPro" id="IPR014014">
    <property type="entry name" value="RNA_helicase_DEAD_Q_motif"/>
</dbReference>
<dbReference type="NCBIfam" id="NF003419">
    <property type="entry name" value="PRK04837.1"/>
    <property type="match status" value="1"/>
</dbReference>
<dbReference type="PANTHER" id="PTHR47959:SF10">
    <property type="entry name" value="ATP-DEPENDENT RNA HELICASE RHLB"/>
    <property type="match status" value="1"/>
</dbReference>
<dbReference type="PANTHER" id="PTHR47959">
    <property type="entry name" value="ATP-DEPENDENT RNA HELICASE RHLE-RELATED"/>
    <property type="match status" value="1"/>
</dbReference>
<dbReference type="Pfam" id="PF00270">
    <property type="entry name" value="DEAD"/>
    <property type="match status" value="1"/>
</dbReference>
<dbReference type="Pfam" id="PF00271">
    <property type="entry name" value="Helicase_C"/>
    <property type="match status" value="1"/>
</dbReference>
<dbReference type="SMART" id="SM00487">
    <property type="entry name" value="DEXDc"/>
    <property type="match status" value="1"/>
</dbReference>
<dbReference type="SMART" id="SM00490">
    <property type="entry name" value="HELICc"/>
    <property type="match status" value="1"/>
</dbReference>
<dbReference type="SUPFAM" id="SSF52540">
    <property type="entry name" value="P-loop containing nucleoside triphosphate hydrolases"/>
    <property type="match status" value="1"/>
</dbReference>
<dbReference type="PROSITE" id="PS00039">
    <property type="entry name" value="DEAD_ATP_HELICASE"/>
    <property type="match status" value="1"/>
</dbReference>
<dbReference type="PROSITE" id="PS51192">
    <property type="entry name" value="HELICASE_ATP_BIND_1"/>
    <property type="match status" value="1"/>
</dbReference>
<dbReference type="PROSITE" id="PS51194">
    <property type="entry name" value="HELICASE_CTER"/>
    <property type="match status" value="1"/>
</dbReference>
<dbReference type="PROSITE" id="PS51195">
    <property type="entry name" value="Q_MOTIF"/>
    <property type="match status" value="1"/>
</dbReference>
<keyword id="KW-0067">ATP-binding</keyword>
<keyword id="KW-0963">Cytoplasm</keyword>
<keyword id="KW-0347">Helicase</keyword>
<keyword id="KW-0378">Hydrolase</keyword>
<keyword id="KW-0547">Nucleotide-binding</keyword>
<keyword id="KW-0694">RNA-binding</keyword>